<accession>Q9BRR9</accession>
<accession>B4DVI3</accession>
<accession>E9PDX9</accession>
<accession>Q8NAF3</accession>
<accession>Q8TCJ3</accession>
<accession>Q8WYR0</accession>
<accession>Q96EZ2</accession>
<accession>Q96S74</accession>
<organism>
    <name type="scientific">Homo sapiens</name>
    <name type="common">Human</name>
    <dbReference type="NCBI Taxonomy" id="9606"/>
    <lineage>
        <taxon>Eukaryota</taxon>
        <taxon>Metazoa</taxon>
        <taxon>Chordata</taxon>
        <taxon>Craniata</taxon>
        <taxon>Vertebrata</taxon>
        <taxon>Euteleostomi</taxon>
        <taxon>Mammalia</taxon>
        <taxon>Eutheria</taxon>
        <taxon>Euarchontoglires</taxon>
        <taxon>Primates</taxon>
        <taxon>Haplorrhini</taxon>
        <taxon>Catarrhini</taxon>
        <taxon>Hominidae</taxon>
        <taxon>Homo</taxon>
    </lineage>
</organism>
<feature type="chain" id="PRO_0000056712" description="Rho GTPase-activating protein 9">
    <location>
        <begin position="1"/>
        <end position="750"/>
    </location>
</feature>
<feature type="domain" description="SH3" evidence="3">
    <location>
        <begin position="22"/>
        <end position="88"/>
    </location>
</feature>
<feature type="domain" description="WW" evidence="4">
    <location>
        <begin position="213"/>
        <end position="247"/>
    </location>
</feature>
<feature type="domain" description="PH" evidence="1">
    <location>
        <begin position="322"/>
        <end position="435"/>
    </location>
</feature>
<feature type="domain" description="Rho-GAP" evidence="2">
    <location>
        <begin position="542"/>
        <end position="749"/>
    </location>
</feature>
<feature type="region of interest" description="Disordered" evidence="5">
    <location>
        <begin position="120"/>
        <end position="187"/>
    </location>
</feature>
<feature type="region of interest" description="Disordered" evidence="5">
    <location>
        <begin position="242"/>
        <end position="319"/>
    </location>
</feature>
<feature type="region of interest" description="Lipid binding">
    <location>
        <begin position="342"/>
        <end position="345"/>
    </location>
</feature>
<feature type="region of interest" description="Lipid binding">
    <location>
        <begin position="397"/>
        <end position="399"/>
    </location>
</feature>
<feature type="region of interest" description="Lipid binding">
    <location>
        <begin position="432"/>
        <end position="669"/>
    </location>
</feature>
<feature type="region of interest" description="Disordered" evidence="5">
    <location>
        <begin position="446"/>
        <end position="488"/>
    </location>
</feature>
<feature type="compositionally biased region" description="Polar residues" evidence="5">
    <location>
        <begin position="163"/>
        <end position="180"/>
    </location>
</feature>
<feature type="compositionally biased region" description="Polar residues" evidence="5">
    <location>
        <begin position="251"/>
        <end position="270"/>
    </location>
</feature>
<feature type="compositionally biased region" description="Polar residues" evidence="5">
    <location>
        <begin position="291"/>
        <end position="300"/>
    </location>
</feature>
<feature type="compositionally biased region" description="Low complexity" evidence="5">
    <location>
        <begin position="301"/>
        <end position="317"/>
    </location>
</feature>
<feature type="compositionally biased region" description="Basic and acidic residues" evidence="5">
    <location>
        <begin position="446"/>
        <end position="462"/>
    </location>
</feature>
<feature type="compositionally biased region" description="Acidic residues" evidence="5">
    <location>
        <begin position="476"/>
        <end position="485"/>
    </location>
</feature>
<feature type="site" description="Arginine finger; crucial for GTP hydrolysis by stabilizing the transition state" evidence="2">
    <location>
        <position position="578"/>
    </location>
</feature>
<feature type="modified residue" description="Phosphoserine" evidence="17 18">
    <location>
        <position position="475"/>
    </location>
</feature>
<feature type="modified residue" description="Phosphoserine" evidence="18">
    <location>
        <position position="500"/>
    </location>
</feature>
<feature type="splice variant" id="VSP_010340" description="In isoform 3 and isoform 4." evidence="12 15">
    <location>
        <begin position="1"/>
        <end position="184"/>
    </location>
</feature>
<feature type="splice variant" id="VSP_010325" description="In isoform 2, isoform 4 and isoform 5." evidence="11 12 13 14">
    <location>
        <begin position="438"/>
        <end position="456"/>
    </location>
</feature>
<feature type="splice variant" id="VSP_046391" description="In isoform 5." evidence="12">
    <original>ALSESEQCLSQIQELIGSMPKPNHDTLRYLLEHLCRVIAHSDKNRMTPHNLGIVFGPTLFRPEQETSDPAAHALYPGQLVQLMLTNFTSLFP</original>
    <variation>G</variation>
    <location>
        <begin position="659"/>
        <end position="750"/>
    </location>
</feature>
<feature type="sequence variant" id="VAR_055830" description="In dbSNP:rs33927108.">
    <original>R</original>
    <variation>G</variation>
    <location>
        <position position="50"/>
    </location>
</feature>
<feature type="sequence variant" id="VAR_055831" description="In dbSNP:rs3802989.">
    <original>R</original>
    <variation>C</variation>
    <location>
        <position position="137"/>
    </location>
</feature>
<feature type="sequence variant" id="VAR_055832" description="In dbSNP:rs11544238." evidence="7 8">
    <original>S</original>
    <variation>A</variation>
    <location>
        <position position="370"/>
    </location>
</feature>
<feature type="mutagenesis site" description="Strongly reduced affinity for phosphoinositides." evidence="9">
    <original>K</original>
    <variation>A</variation>
    <location>
        <position position="343"/>
    </location>
</feature>
<feature type="mutagenesis site" description="Reduced affinity for phosphoinositides." evidence="9">
    <original>R</original>
    <variation>A</variation>
    <location>
        <position position="399"/>
    </location>
</feature>
<feature type="sequence conflict" description="In Ref. 2; AAH06107." evidence="16" ref="2">
    <original>L</original>
    <variation>F</variation>
    <location>
        <position position="152"/>
    </location>
</feature>
<feature type="sequence conflict" description="In Ref. 3; BAC03969." evidence="16" ref="3">
    <original>V</original>
    <variation>A</variation>
    <location>
        <position position="195"/>
    </location>
</feature>
<feature type="strand" evidence="19">
    <location>
        <begin position="322"/>
        <end position="336"/>
    </location>
</feature>
<feature type="strand" evidence="19">
    <location>
        <begin position="346"/>
        <end position="361"/>
    </location>
</feature>
<feature type="helix" evidence="20">
    <location>
        <begin position="368"/>
        <end position="370"/>
    </location>
</feature>
<feature type="strand" evidence="19">
    <location>
        <begin position="380"/>
        <end position="384"/>
    </location>
</feature>
<feature type="strand" evidence="19">
    <location>
        <begin position="389"/>
        <end position="392"/>
    </location>
</feature>
<feature type="turn" evidence="20">
    <location>
        <begin position="394"/>
        <end position="396"/>
    </location>
</feature>
<feature type="strand" evidence="19">
    <location>
        <begin position="398"/>
        <end position="406"/>
    </location>
</feature>
<feature type="strand" evidence="19">
    <location>
        <begin position="412"/>
        <end position="416"/>
    </location>
</feature>
<feature type="helix" evidence="19">
    <location>
        <begin position="420"/>
        <end position="439"/>
    </location>
</feature>
<sequence length="750" mass="83260">MLSSRWWPSSWGILGLGPRSPPRGSQLCALYAFTYTGADGQQVSLAEGDRFLLLRKTNSDWWLARRLEAPSTSRPIFVPAAYMIEESIPSQSPTTVIPGQLLWTPGPKLFHGSLEELSQALPSRAQASSEQPPPLPRKMCRSVSTDNLSPSLLKPFQEGPSGRSLSQEDLPSEASASTAGPQPLMSEPPVYCNLVDLRRCPRSPPPGPACPLLQRLDAWEQHLDPNSGRCFYINSLTGCKSWKPPRRSRSETNPGSMEGTQTLKRNNDVLQPQAKGFRSDTGTPEPLDPQGSLSLSQRTSQLDPPALQAPRPLPQLLDDPHEVEKSGLLNMTKIAQGGRKLRKNWGPSWVVLTGNSLVFYREPPPTAPSSGWGPAGSRPESSVDLRGAALAHGRHLSSRRNVLHIRTIPGHEFLLQSDHETELRAWHRALRTVIERLVRWVEARREAPTGRDQGSGDRENPLELRLSGSGPAELSAGEDEEEESELVSKPLLRLSSRRSSIRGPEGTEQNRVRNKLKRLIAKRPPLQSLQERGLLRDQVFGCQLESLCQREGDTVPSFLRLCIAAVDKRGLDVDGIYRVSGNLAVVQKLRFLVDRERAVTSDGRYVFPEQPGQEGRLDLDSTEWDDIHVVTGALKLFLRELPQPLVPPLLLPHFRAALALSESEQCLSQIQELIGSMPKPNHDTLRYLLEHLCRVIAHSDKNRMTPHNLGIVFGPTLFRPEQETSDPAAHALYPGQLVQLMLTNFTSLFP</sequence>
<protein>
    <recommendedName>
        <fullName>Rho GTPase-activating protein 9</fullName>
    </recommendedName>
    <alternativeName>
        <fullName>Rho-type GTPase-activating protein 9</fullName>
    </alternativeName>
</protein>
<reference key="1">
    <citation type="journal article" date="2001" name="Biochem. Biophys. Res. Commun.">
        <title>Isolation of a novel human gene, ARHGAP9, encoding a rho-GTPase activating protein.</title>
        <authorList>
            <person name="Furukawa Y."/>
            <person name="Kawasoe T."/>
            <person name="Daigo Y."/>
            <person name="Nishiwaki T."/>
            <person name="Ishiguro H."/>
            <person name="Takahashi M."/>
            <person name="Kitayama J."/>
            <person name="Nakamura Y."/>
        </authorList>
    </citation>
    <scope>NUCLEOTIDE SEQUENCE [MRNA] (ISOFORM 2)</scope>
    <scope>FUNCTION</scope>
    <scope>TISSUE SPECIFICITY</scope>
</reference>
<reference key="2">
    <citation type="submission" date="1999-07" db="EMBL/GenBank/DDBJ databases">
        <title>Isolation, mapping, and characterization of a novel member of human rho-GAP family.</title>
        <authorList>
            <person name="Kawasoe T."/>
            <person name="Furukawa Y."/>
            <person name="Daigo Y."/>
            <person name="Nishiwaki T."/>
            <person name="Ishiguro H."/>
            <person name="Fujita M."/>
            <person name="Ogawa M."/>
            <person name="Nakamura Y."/>
        </authorList>
    </citation>
    <scope>NUCLEOTIDE SEQUENCE [MRNA] (ISOFORM 3)</scope>
</reference>
<reference key="3">
    <citation type="journal article" date="2004" name="Nat. Genet.">
        <title>Complete sequencing and characterization of 21,243 full-length human cDNAs.</title>
        <authorList>
            <person name="Ota T."/>
            <person name="Suzuki Y."/>
            <person name="Nishikawa T."/>
            <person name="Otsuki T."/>
            <person name="Sugiyama T."/>
            <person name="Irie R."/>
            <person name="Wakamatsu A."/>
            <person name="Hayashi K."/>
            <person name="Sato H."/>
            <person name="Nagai K."/>
            <person name="Kimura K."/>
            <person name="Makita H."/>
            <person name="Sekine M."/>
            <person name="Obayashi M."/>
            <person name="Nishi T."/>
            <person name="Shibahara T."/>
            <person name="Tanaka T."/>
            <person name="Ishii S."/>
            <person name="Yamamoto J."/>
            <person name="Saito K."/>
            <person name="Kawai Y."/>
            <person name="Isono Y."/>
            <person name="Nakamura Y."/>
            <person name="Nagahari K."/>
            <person name="Murakami K."/>
            <person name="Yasuda T."/>
            <person name="Iwayanagi T."/>
            <person name="Wagatsuma M."/>
            <person name="Shiratori A."/>
            <person name="Sudo H."/>
            <person name="Hosoiri T."/>
            <person name="Kaku Y."/>
            <person name="Kodaira H."/>
            <person name="Kondo H."/>
            <person name="Sugawara M."/>
            <person name="Takahashi M."/>
            <person name="Kanda K."/>
            <person name="Yokoi T."/>
            <person name="Furuya T."/>
            <person name="Kikkawa E."/>
            <person name="Omura Y."/>
            <person name="Abe K."/>
            <person name="Kamihara K."/>
            <person name="Katsuta N."/>
            <person name="Sato K."/>
            <person name="Tanikawa M."/>
            <person name="Yamazaki M."/>
            <person name="Ninomiya K."/>
            <person name="Ishibashi T."/>
            <person name="Yamashita H."/>
            <person name="Murakawa K."/>
            <person name="Fujimori K."/>
            <person name="Tanai H."/>
            <person name="Kimata M."/>
            <person name="Watanabe M."/>
            <person name="Hiraoka S."/>
            <person name="Chiba Y."/>
            <person name="Ishida S."/>
            <person name="Ono Y."/>
            <person name="Takiguchi S."/>
            <person name="Watanabe S."/>
            <person name="Yosida M."/>
            <person name="Hotuta T."/>
            <person name="Kusano J."/>
            <person name="Kanehori K."/>
            <person name="Takahashi-Fujii A."/>
            <person name="Hara H."/>
            <person name="Tanase T.-O."/>
            <person name="Nomura Y."/>
            <person name="Togiya S."/>
            <person name="Komai F."/>
            <person name="Hara R."/>
            <person name="Takeuchi K."/>
            <person name="Arita M."/>
            <person name="Imose N."/>
            <person name="Musashino K."/>
            <person name="Yuuki H."/>
            <person name="Oshima A."/>
            <person name="Sasaki N."/>
            <person name="Aotsuka S."/>
            <person name="Yoshikawa Y."/>
            <person name="Matsunawa H."/>
            <person name="Ichihara T."/>
            <person name="Shiohata N."/>
            <person name="Sano S."/>
            <person name="Moriya S."/>
            <person name="Momiyama H."/>
            <person name="Satoh N."/>
            <person name="Takami S."/>
            <person name="Terashima Y."/>
            <person name="Suzuki O."/>
            <person name="Nakagawa S."/>
            <person name="Senoh A."/>
            <person name="Mizoguchi H."/>
            <person name="Goto Y."/>
            <person name="Shimizu F."/>
            <person name="Wakebe H."/>
            <person name="Hishigaki H."/>
            <person name="Watanabe T."/>
            <person name="Sugiyama A."/>
            <person name="Takemoto M."/>
            <person name="Kawakami B."/>
            <person name="Yamazaki M."/>
            <person name="Watanabe K."/>
            <person name="Kumagai A."/>
            <person name="Itakura S."/>
            <person name="Fukuzumi Y."/>
            <person name="Fujimori Y."/>
            <person name="Komiyama M."/>
            <person name="Tashiro H."/>
            <person name="Tanigami A."/>
            <person name="Fujiwara T."/>
            <person name="Ono T."/>
            <person name="Yamada K."/>
            <person name="Fujii Y."/>
            <person name="Ozaki K."/>
            <person name="Hirao M."/>
            <person name="Ohmori Y."/>
            <person name="Kawabata A."/>
            <person name="Hikiji T."/>
            <person name="Kobatake N."/>
            <person name="Inagaki H."/>
            <person name="Ikema Y."/>
            <person name="Okamoto S."/>
            <person name="Okitani R."/>
            <person name="Kawakami T."/>
            <person name="Noguchi S."/>
            <person name="Itoh T."/>
            <person name="Shigeta K."/>
            <person name="Senba T."/>
            <person name="Matsumura K."/>
            <person name="Nakajima Y."/>
            <person name="Mizuno T."/>
            <person name="Morinaga M."/>
            <person name="Sasaki M."/>
            <person name="Togashi T."/>
            <person name="Oyama M."/>
            <person name="Hata H."/>
            <person name="Watanabe M."/>
            <person name="Komatsu T."/>
            <person name="Mizushima-Sugano J."/>
            <person name="Satoh T."/>
            <person name="Shirai Y."/>
            <person name="Takahashi Y."/>
            <person name="Nakagawa K."/>
            <person name="Okumura K."/>
            <person name="Nagase T."/>
            <person name="Nomura N."/>
            <person name="Kikuchi H."/>
            <person name="Masuho Y."/>
            <person name="Yamashita R."/>
            <person name="Nakai K."/>
            <person name="Yada T."/>
            <person name="Nakamura Y."/>
            <person name="Ohara O."/>
            <person name="Isogai T."/>
            <person name="Sugano S."/>
        </authorList>
    </citation>
    <scope>NUCLEOTIDE SEQUENCE [LARGE SCALE MRNA] (ISOFORMS 4 AND 5)</scope>
    <scope>VARIANT ALA-370</scope>
    <source>
        <tissue>Small intestine</tissue>
        <tissue>Spleen</tissue>
    </source>
</reference>
<reference key="4">
    <citation type="journal article" date="2006" name="Nature">
        <title>The finished DNA sequence of human chromosome 12.</title>
        <authorList>
            <person name="Scherer S.E."/>
            <person name="Muzny D.M."/>
            <person name="Buhay C.J."/>
            <person name="Chen R."/>
            <person name="Cree A."/>
            <person name="Ding Y."/>
            <person name="Dugan-Rocha S."/>
            <person name="Gill R."/>
            <person name="Gunaratne P."/>
            <person name="Harris R.A."/>
            <person name="Hawes A.C."/>
            <person name="Hernandez J."/>
            <person name="Hodgson A.V."/>
            <person name="Hume J."/>
            <person name="Jackson A."/>
            <person name="Khan Z.M."/>
            <person name="Kovar-Smith C."/>
            <person name="Lewis L.R."/>
            <person name="Lozado R.J."/>
            <person name="Metzker M.L."/>
            <person name="Milosavljevic A."/>
            <person name="Miner G.R."/>
            <person name="Montgomery K.T."/>
            <person name="Morgan M.B."/>
            <person name="Nazareth L.V."/>
            <person name="Scott G."/>
            <person name="Sodergren E."/>
            <person name="Song X.-Z."/>
            <person name="Steffen D."/>
            <person name="Lovering R.C."/>
            <person name="Wheeler D.A."/>
            <person name="Worley K.C."/>
            <person name="Yuan Y."/>
            <person name="Zhang Z."/>
            <person name="Adams C.Q."/>
            <person name="Ansari-Lari M.A."/>
            <person name="Ayele M."/>
            <person name="Brown M.J."/>
            <person name="Chen G."/>
            <person name="Chen Z."/>
            <person name="Clerc-Blankenburg K.P."/>
            <person name="Davis C."/>
            <person name="Delgado O."/>
            <person name="Dinh H.H."/>
            <person name="Draper H."/>
            <person name="Gonzalez-Garay M.L."/>
            <person name="Havlak P."/>
            <person name="Jackson L.R."/>
            <person name="Jacob L.S."/>
            <person name="Kelly S.H."/>
            <person name="Li L."/>
            <person name="Li Z."/>
            <person name="Liu J."/>
            <person name="Liu W."/>
            <person name="Lu J."/>
            <person name="Maheshwari M."/>
            <person name="Nguyen B.-V."/>
            <person name="Okwuonu G.O."/>
            <person name="Pasternak S."/>
            <person name="Perez L.M."/>
            <person name="Plopper F.J.H."/>
            <person name="Santibanez J."/>
            <person name="Shen H."/>
            <person name="Tabor P.E."/>
            <person name="Verduzco D."/>
            <person name="Waldron L."/>
            <person name="Wang Q."/>
            <person name="Williams G.A."/>
            <person name="Zhang J."/>
            <person name="Zhou J."/>
            <person name="Allen C.C."/>
            <person name="Amin A.G."/>
            <person name="Anyalebechi V."/>
            <person name="Bailey M."/>
            <person name="Barbaria J.A."/>
            <person name="Bimage K.E."/>
            <person name="Bryant N.P."/>
            <person name="Burch P.E."/>
            <person name="Burkett C.E."/>
            <person name="Burrell K.L."/>
            <person name="Calderon E."/>
            <person name="Cardenas V."/>
            <person name="Carter K."/>
            <person name="Casias K."/>
            <person name="Cavazos I."/>
            <person name="Cavazos S.R."/>
            <person name="Ceasar H."/>
            <person name="Chacko J."/>
            <person name="Chan S.N."/>
            <person name="Chavez D."/>
            <person name="Christopoulos C."/>
            <person name="Chu J."/>
            <person name="Cockrell R."/>
            <person name="Cox C.D."/>
            <person name="Dang M."/>
            <person name="Dathorne S.R."/>
            <person name="David R."/>
            <person name="Davis C.M."/>
            <person name="Davy-Carroll L."/>
            <person name="Deshazo D.R."/>
            <person name="Donlin J.E."/>
            <person name="D'Souza L."/>
            <person name="Eaves K.A."/>
            <person name="Egan A."/>
            <person name="Emery-Cohen A.J."/>
            <person name="Escotto M."/>
            <person name="Flagg N."/>
            <person name="Forbes L.D."/>
            <person name="Gabisi A.M."/>
            <person name="Garza M."/>
            <person name="Hamilton C."/>
            <person name="Henderson N."/>
            <person name="Hernandez O."/>
            <person name="Hines S."/>
            <person name="Hogues M.E."/>
            <person name="Huang M."/>
            <person name="Idlebird D.G."/>
            <person name="Johnson R."/>
            <person name="Jolivet A."/>
            <person name="Jones S."/>
            <person name="Kagan R."/>
            <person name="King L.M."/>
            <person name="Leal B."/>
            <person name="Lebow H."/>
            <person name="Lee S."/>
            <person name="LeVan J.M."/>
            <person name="Lewis L.C."/>
            <person name="London P."/>
            <person name="Lorensuhewa L.M."/>
            <person name="Loulseged H."/>
            <person name="Lovett D.A."/>
            <person name="Lucier A."/>
            <person name="Lucier R.L."/>
            <person name="Ma J."/>
            <person name="Madu R.C."/>
            <person name="Mapua P."/>
            <person name="Martindale A.D."/>
            <person name="Martinez E."/>
            <person name="Massey E."/>
            <person name="Mawhiney S."/>
            <person name="Meador M.G."/>
            <person name="Mendez S."/>
            <person name="Mercado C."/>
            <person name="Mercado I.C."/>
            <person name="Merritt C.E."/>
            <person name="Miner Z.L."/>
            <person name="Minja E."/>
            <person name="Mitchell T."/>
            <person name="Mohabbat F."/>
            <person name="Mohabbat K."/>
            <person name="Montgomery B."/>
            <person name="Moore N."/>
            <person name="Morris S."/>
            <person name="Munidasa M."/>
            <person name="Ngo R.N."/>
            <person name="Nguyen N.B."/>
            <person name="Nickerson E."/>
            <person name="Nwaokelemeh O.O."/>
            <person name="Nwokenkwo S."/>
            <person name="Obregon M."/>
            <person name="Oguh M."/>
            <person name="Oragunye N."/>
            <person name="Oviedo R.J."/>
            <person name="Parish B.J."/>
            <person name="Parker D.N."/>
            <person name="Parrish J."/>
            <person name="Parks K.L."/>
            <person name="Paul H.A."/>
            <person name="Payton B.A."/>
            <person name="Perez A."/>
            <person name="Perrin W."/>
            <person name="Pickens A."/>
            <person name="Primus E.L."/>
            <person name="Pu L.-L."/>
            <person name="Puazo M."/>
            <person name="Quiles M.M."/>
            <person name="Quiroz J.B."/>
            <person name="Rabata D."/>
            <person name="Reeves K."/>
            <person name="Ruiz S.J."/>
            <person name="Shao H."/>
            <person name="Sisson I."/>
            <person name="Sonaike T."/>
            <person name="Sorelle R.P."/>
            <person name="Sutton A.E."/>
            <person name="Svatek A.F."/>
            <person name="Svetz L.A."/>
            <person name="Tamerisa K.S."/>
            <person name="Taylor T.R."/>
            <person name="Teague B."/>
            <person name="Thomas N."/>
            <person name="Thorn R.D."/>
            <person name="Trejos Z.Y."/>
            <person name="Trevino B.K."/>
            <person name="Ukegbu O.N."/>
            <person name="Urban J.B."/>
            <person name="Vasquez L.I."/>
            <person name="Vera V.A."/>
            <person name="Villasana D.M."/>
            <person name="Wang L."/>
            <person name="Ward-Moore S."/>
            <person name="Warren J.T."/>
            <person name="Wei X."/>
            <person name="White F."/>
            <person name="Williamson A.L."/>
            <person name="Wleczyk R."/>
            <person name="Wooden H.S."/>
            <person name="Wooden S.H."/>
            <person name="Yen J."/>
            <person name="Yoon L."/>
            <person name="Yoon V."/>
            <person name="Zorrilla S.E."/>
            <person name="Nelson D."/>
            <person name="Kucherlapati R."/>
            <person name="Weinstock G."/>
            <person name="Gibbs R.A."/>
        </authorList>
    </citation>
    <scope>NUCLEOTIDE SEQUENCE [LARGE SCALE GENOMIC DNA]</scope>
</reference>
<reference key="5">
    <citation type="journal article" date="2004" name="Genome Res.">
        <title>The status, quality, and expansion of the NIH full-length cDNA project: the Mammalian Gene Collection (MGC).</title>
        <authorList>
            <consortium name="The MGC Project Team"/>
        </authorList>
    </citation>
    <scope>NUCLEOTIDE SEQUENCE [LARGE SCALE MRNA] (ISOFORMS 1 AND 2)</scope>
    <scope>VARIANT ALA-370</scope>
    <source>
        <tissue>Lymph</tissue>
        <tissue>Muscle</tissue>
    </source>
</reference>
<reference key="6">
    <citation type="journal article" date="2007" name="BMC Genomics">
        <title>The full-ORF clone resource of the German cDNA consortium.</title>
        <authorList>
            <person name="Bechtel S."/>
            <person name="Rosenfelder H."/>
            <person name="Duda A."/>
            <person name="Schmidt C.P."/>
            <person name="Ernst U."/>
            <person name="Wellenreuther R."/>
            <person name="Mehrle A."/>
            <person name="Schuster C."/>
            <person name="Bahr A."/>
            <person name="Bloecker H."/>
            <person name="Heubner D."/>
            <person name="Hoerlein A."/>
            <person name="Michel G."/>
            <person name="Wedler H."/>
            <person name="Koehrer K."/>
            <person name="Ottenwaelder B."/>
            <person name="Poustka A."/>
            <person name="Wiemann S."/>
            <person name="Schupp I."/>
        </authorList>
    </citation>
    <scope>NUCLEOTIDE SEQUENCE [LARGE SCALE MRNA] OF 384-750 (ISOFORM 2)</scope>
    <source>
        <tissue>Lymph node</tissue>
    </source>
</reference>
<reference key="7">
    <citation type="journal article" date="2009" name="BMC Immunol.">
        <title>Identification of SH3 domain interaction partners of human FasL (CD178) by phage display screening.</title>
        <authorList>
            <person name="Voss M."/>
            <person name="Lettau M."/>
            <person name="Janssen O."/>
        </authorList>
    </citation>
    <scope>INTERACTION WITH FASLG</scope>
</reference>
<reference key="8">
    <citation type="journal article" date="2009" name="Sci. Signal.">
        <title>Quantitative phosphoproteomic analysis of T cell receptor signaling reveals system-wide modulation of protein-protein interactions.</title>
        <authorList>
            <person name="Mayya V."/>
            <person name="Lundgren D.H."/>
            <person name="Hwang S.-I."/>
            <person name="Rezaul K."/>
            <person name="Wu L."/>
            <person name="Eng J.K."/>
            <person name="Rodionov V."/>
            <person name="Han D.K."/>
        </authorList>
    </citation>
    <scope>PHOSPHORYLATION [LARGE SCALE ANALYSIS] AT SER-475</scope>
    <scope>IDENTIFICATION BY MASS SPECTROMETRY [LARGE SCALE ANALYSIS]</scope>
    <source>
        <tissue>Leukemic T-cell</tissue>
    </source>
</reference>
<reference key="9">
    <citation type="journal article" date="2013" name="J. Proteome Res.">
        <title>Toward a comprehensive characterization of a human cancer cell phosphoproteome.</title>
        <authorList>
            <person name="Zhou H."/>
            <person name="Di Palma S."/>
            <person name="Preisinger C."/>
            <person name="Peng M."/>
            <person name="Polat A.N."/>
            <person name="Heck A.J."/>
            <person name="Mohammed S."/>
        </authorList>
    </citation>
    <scope>PHOSPHORYLATION [LARGE SCALE ANALYSIS] AT SER-475 AND SER-500</scope>
    <scope>IDENTIFICATION BY MASS SPECTROMETRY [LARGE SCALE ANALYSIS]</scope>
    <source>
        <tissue>Erythroleukemia</tissue>
    </source>
</reference>
<reference key="10">
    <citation type="journal article" date="2007" name="J. Biol. Chem.">
        <title>Non-canonical interaction of phosphoinositides with pleckstrin homology domains of Tiam1 and ArhGAP9.</title>
        <authorList>
            <person name="Ceccarelli D.F."/>
            <person name="Blasutig I.M."/>
            <person name="Goudreault M."/>
            <person name="Li Z."/>
            <person name="Ruston J."/>
            <person name="Pawson T."/>
            <person name="Sicheri F."/>
        </authorList>
    </citation>
    <scope>X-RAY CRYSTALLOGRAPHY (1.81 ANGSTROMS) OF 321-440 IN COMPLEXES WITH PHOSPHATIDYLINOSITOL 1,4,5-TRISPHOSPHATE AND PHOSPHATIDYLINOSITOL 1,3,4-TRISPHOSPHATE</scope>
    <scope>DOMAIN</scope>
    <scope>MUTAGENESIS OF LYS-343 AND ARG-399</scope>
    <scope>LIPID-BINDING</scope>
</reference>
<evidence type="ECO:0000255" key="1">
    <source>
        <dbReference type="PROSITE-ProRule" id="PRU00145"/>
    </source>
</evidence>
<evidence type="ECO:0000255" key="2">
    <source>
        <dbReference type="PROSITE-ProRule" id="PRU00172"/>
    </source>
</evidence>
<evidence type="ECO:0000255" key="3">
    <source>
        <dbReference type="PROSITE-ProRule" id="PRU00192"/>
    </source>
</evidence>
<evidence type="ECO:0000255" key="4">
    <source>
        <dbReference type="PROSITE-ProRule" id="PRU00224"/>
    </source>
</evidence>
<evidence type="ECO:0000256" key="5">
    <source>
        <dbReference type="SAM" id="MobiDB-lite"/>
    </source>
</evidence>
<evidence type="ECO:0000269" key="6">
    <source>
    </source>
</evidence>
<evidence type="ECO:0000269" key="7">
    <source>
    </source>
</evidence>
<evidence type="ECO:0000269" key="8">
    <source>
    </source>
</evidence>
<evidence type="ECO:0000269" key="9">
    <source>
    </source>
</evidence>
<evidence type="ECO:0000269" key="10">
    <source>
    </source>
</evidence>
<evidence type="ECO:0000303" key="11">
    <source>
    </source>
</evidence>
<evidence type="ECO:0000303" key="12">
    <source>
    </source>
</evidence>
<evidence type="ECO:0000303" key="13">
    <source>
    </source>
</evidence>
<evidence type="ECO:0000303" key="14">
    <source>
    </source>
</evidence>
<evidence type="ECO:0000303" key="15">
    <source ref="2"/>
</evidence>
<evidence type="ECO:0000305" key="16"/>
<evidence type="ECO:0007744" key="17">
    <source>
    </source>
</evidence>
<evidence type="ECO:0007744" key="18">
    <source>
    </source>
</evidence>
<evidence type="ECO:0007829" key="19">
    <source>
        <dbReference type="PDB" id="2P0D"/>
    </source>
</evidence>
<evidence type="ECO:0007829" key="20">
    <source>
        <dbReference type="PDB" id="2P0H"/>
    </source>
</evidence>
<name>RHG09_HUMAN</name>
<proteinExistence type="evidence at protein level"/>
<gene>
    <name type="primary">ARHGAP9</name>
</gene>
<comment type="function">
    <text evidence="6">GTPase activator for the Rho-type GTPases by converting them to an inactive GDP-bound state. Has a substantial GAP activity toward CDC42 and RAC1 and less toward RHOA. Has a role in regulating adhesion of hematopoietic cells to the extracellular matrix. Binds phosphoinositides, and has the highest affinity for phosphatidylinositol 3,4,5-trisphosphate, followed by phosphatidylinositol 3,4-bisphosphate and phosphatidylinositol 4,5-bisphosphate.</text>
</comment>
<comment type="subunit">
    <text evidence="10">Interacts with FASLG.</text>
</comment>
<comment type="interaction">
    <interactant intactId="EBI-750254">
        <id>Q9BRR9</id>
    </interactant>
    <interactant intactId="EBI-742038">
        <id>Q9P2A4</id>
        <label>ABI3</label>
    </interactant>
    <organismsDiffer>false</organismsDiffer>
    <experiments>3</experiments>
</comment>
<comment type="interaction">
    <interactant intactId="EBI-750254">
        <id>Q9BRR9</id>
    </interactant>
    <interactant intactId="EBI-3867333">
        <id>A8MQ03</id>
        <label>CYSRT1</label>
    </interactant>
    <organismsDiffer>false</organismsDiffer>
    <experiments>3</experiments>
</comment>
<comment type="interaction">
    <interactant intactId="EBI-750254">
        <id>Q9BRR9</id>
    </interactant>
    <interactant intactId="EBI-701903">
        <id>Q14192</id>
        <label>FHL2</label>
    </interactant>
    <organismsDiffer>false</organismsDiffer>
    <experiments>3</experiments>
</comment>
<comment type="interaction">
    <interactant intactId="EBI-750254">
        <id>Q9BRR9</id>
    </interactant>
    <interactant intactId="EBI-11163335">
        <id>Q9NYA3</id>
        <label>GOLGA6A</label>
    </interactant>
    <organismsDiffer>false</organismsDiffer>
    <experiments>3</experiments>
</comment>
<comment type="interaction">
    <interactant intactId="EBI-750254">
        <id>Q9BRR9</id>
    </interactant>
    <interactant intactId="EBI-5916454">
        <id>A6NEM1</id>
        <label>GOLGA6L9</label>
    </interactant>
    <organismsDiffer>false</organismsDiffer>
    <experiments>3</experiments>
</comment>
<comment type="interaction">
    <interactant intactId="EBI-750254">
        <id>Q9BRR9</id>
    </interactant>
    <interactant intactId="EBI-401755">
        <id>P62993</id>
        <label>GRB2</label>
    </interactant>
    <organismsDiffer>false</organismsDiffer>
    <experiments>3</experiments>
</comment>
<comment type="interaction">
    <interactant intactId="EBI-750254">
        <id>Q9BRR9</id>
    </interactant>
    <interactant intactId="EBI-720441">
        <id>Q96DV4</id>
        <label>MRPL38</label>
    </interactant>
    <organismsDiffer>false</organismsDiffer>
    <experiments>3</experiments>
</comment>
<comment type="interaction">
    <interactant intactId="EBI-750254">
        <id>Q9BRR9</id>
    </interactant>
    <interactant intactId="EBI-744782">
        <id>Q9Y5B8</id>
        <label>NME7</label>
    </interactant>
    <organismsDiffer>false</organismsDiffer>
    <experiments>3</experiments>
</comment>
<comment type="interaction">
    <interactant intactId="EBI-750254">
        <id>Q9BRR9</id>
    </interactant>
    <interactant intactId="EBI-11984663">
        <id>Q06455-2</id>
        <label>RUNX1T1</label>
    </interactant>
    <organismsDiffer>false</organismsDiffer>
    <experiments>3</experiments>
</comment>
<comment type="interaction">
    <interactant intactId="EBI-750254">
        <id>Q9BRR9</id>
    </interactant>
    <interactant intactId="EBI-766589">
        <id>P09234</id>
        <label>SNRPC</label>
    </interactant>
    <organismsDiffer>false</organismsDiffer>
    <experiments>3</experiments>
</comment>
<comment type="interaction">
    <interactant intactId="EBI-750254">
        <id>Q9BRR9</id>
    </interactant>
    <interactant intactId="EBI-739485">
        <id>Q9Y3Q8</id>
        <label>TSC22D4</label>
    </interactant>
    <organismsDiffer>false</organismsDiffer>
    <experiments>3</experiments>
</comment>
<comment type="alternative products">
    <event type="alternative splicing"/>
    <isoform>
        <id>Q9BRR9-1</id>
        <name>1</name>
        <sequence type="displayed"/>
    </isoform>
    <isoform>
        <id>Q9BRR9-2</id>
        <name>2</name>
        <sequence type="described" ref="VSP_010325"/>
    </isoform>
    <isoform>
        <id>Q9BRR9-3</id>
        <name>3</name>
        <sequence type="described" ref="VSP_010340"/>
    </isoform>
    <isoform>
        <id>Q9BRR9-4</id>
        <name>4</name>
        <sequence type="described" ref="VSP_010340 VSP_010325"/>
    </isoform>
    <isoform>
        <id>Q9BRR9-5</id>
        <name>5</name>
        <sequence type="described" ref="VSP_010325 VSP_046391"/>
    </isoform>
</comment>
<comment type="tissue specificity">
    <text evidence="6">Predominantly expressed in peripheral blood leukocytes, spleen, and thymus.</text>
</comment>
<comment type="domain">
    <text evidence="9">A region including the PH domain and partially overlapping with the Rho-GAP domain mediates interaction with phosphoinositides.</text>
</comment>
<keyword id="KW-0002">3D-structure</keyword>
<keyword id="KW-0025">Alternative splicing</keyword>
<keyword id="KW-0343">GTPase activation</keyword>
<keyword id="KW-0446">Lipid-binding</keyword>
<keyword id="KW-0597">Phosphoprotein</keyword>
<keyword id="KW-1267">Proteomics identification</keyword>
<keyword id="KW-1185">Reference proteome</keyword>
<keyword id="KW-0728">SH3 domain</keyword>
<dbReference type="EMBL" id="AB051853">
    <property type="protein sequence ID" value="BAB56159.1"/>
    <property type="molecule type" value="mRNA"/>
</dbReference>
<dbReference type="EMBL" id="AB030239">
    <property type="protein sequence ID" value="BAB83128.1"/>
    <property type="molecule type" value="mRNA"/>
</dbReference>
<dbReference type="EMBL" id="AK092763">
    <property type="protein sequence ID" value="BAC03969.1"/>
    <property type="molecule type" value="mRNA"/>
</dbReference>
<dbReference type="EMBL" id="AK301095">
    <property type="protein sequence ID" value="BAG62695.1"/>
    <property type="molecule type" value="mRNA"/>
</dbReference>
<dbReference type="EMBL" id="AC022506">
    <property type="status" value="NOT_ANNOTATED_CDS"/>
    <property type="molecule type" value="Genomic_DNA"/>
</dbReference>
<dbReference type="EMBL" id="BC006107">
    <property type="protein sequence ID" value="AAH06107.1"/>
    <property type="molecule type" value="mRNA"/>
</dbReference>
<dbReference type="EMBL" id="BC011820">
    <property type="protein sequence ID" value="AAH11820.1"/>
    <property type="molecule type" value="mRNA"/>
</dbReference>
<dbReference type="EMBL" id="AL713803">
    <property type="protein sequence ID" value="CAD28552.1"/>
    <property type="molecule type" value="mRNA"/>
</dbReference>
<dbReference type="CCDS" id="CCDS44928.1">
    <molecule id="Q9BRR9-4"/>
</dbReference>
<dbReference type="CCDS" id="CCDS44929.1">
    <molecule id="Q9BRR9-5"/>
</dbReference>
<dbReference type="CCDS" id="CCDS81705.2">
    <molecule id="Q9BRR9-1"/>
</dbReference>
<dbReference type="CCDS" id="CCDS8941.2">
    <molecule id="Q9BRR9-2"/>
</dbReference>
<dbReference type="PIR" id="JC7701">
    <property type="entry name" value="JC7701"/>
</dbReference>
<dbReference type="RefSeq" id="NP_001073625.1">
    <molecule id="Q9BRR9-4"/>
    <property type="nucleotide sequence ID" value="NM_001080156.3"/>
</dbReference>
<dbReference type="RefSeq" id="NP_001073626.1">
    <molecule id="Q9BRR9-5"/>
    <property type="nucleotide sequence ID" value="NM_001080157.2"/>
</dbReference>
<dbReference type="RefSeq" id="NP_001306779.2">
    <molecule id="Q9BRR9-1"/>
    <property type="nucleotide sequence ID" value="NM_001319850.2"/>
</dbReference>
<dbReference type="RefSeq" id="NP_001306780.1">
    <property type="nucleotide sequence ID" value="NM_001319851.1"/>
</dbReference>
<dbReference type="RefSeq" id="NP_001306781.1">
    <molecule id="Q9BRR9-3"/>
    <property type="nucleotide sequence ID" value="NM_001319852.2"/>
</dbReference>
<dbReference type="RefSeq" id="NP_001354355.1">
    <molecule id="Q9BRR9-4"/>
    <property type="nucleotide sequence ID" value="NM_001367426.1"/>
</dbReference>
<dbReference type="RefSeq" id="NP_115885.2">
    <molecule id="Q9BRR9-2"/>
    <property type="nucleotide sequence ID" value="NM_032496.4"/>
</dbReference>
<dbReference type="RefSeq" id="XP_005269140.1">
    <molecule id="Q9BRR9-3"/>
    <property type="nucleotide sequence ID" value="XM_005269083.3"/>
</dbReference>
<dbReference type="RefSeq" id="XP_011536958.1">
    <molecule id="Q9BRR9-2"/>
    <property type="nucleotide sequence ID" value="XM_011538656.3"/>
</dbReference>
<dbReference type="RefSeq" id="XP_011536961.1">
    <molecule id="Q9BRR9-5"/>
    <property type="nucleotide sequence ID" value="XM_011538659.3"/>
</dbReference>
<dbReference type="RefSeq" id="XP_016875289.1">
    <property type="nucleotide sequence ID" value="XM_017019800.1"/>
</dbReference>
<dbReference type="RefSeq" id="XP_016875290.1">
    <property type="nucleotide sequence ID" value="XM_017019801.1"/>
</dbReference>
<dbReference type="RefSeq" id="XP_047285286.1">
    <molecule id="Q9BRR9-1"/>
    <property type="nucleotide sequence ID" value="XM_047429330.1"/>
</dbReference>
<dbReference type="RefSeq" id="XP_047285287.1">
    <molecule id="Q9BRR9-1"/>
    <property type="nucleotide sequence ID" value="XM_047429331.1"/>
</dbReference>
<dbReference type="RefSeq" id="XP_047285288.1">
    <molecule id="Q9BRR9-2"/>
    <property type="nucleotide sequence ID" value="XM_047429332.1"/>
</dbReference>
<dbReference type="RefSeq" id="XP_047285289.1">
    <molecule id="Q9BRR9-2"/>
    <property type="nucleotide sequence ID" value="XM_047429333.1"/>
</dbReference>
<dbReference type="RefSeq" id="XP_047285292.1">
    <molecule id="Q9BRR9-3"/>
    <property type="nucleotide sequence ID" value="XM_047429336.1"/>
</dbReference>
<dbReference type="RefSeq" id="XP_047285293.1">
    <molecule id="Q9BRR9-4"/>
    <property type="nucleotide sequence ID" value="XM_047429337.1"/>
</dbReference>
<dbReference type="PDB" id="2P0D">
    <property type="method" value="X-ray"/>
    <property type="resolution" value="1.81 A"/>
    <property type="chains" value="A=321-440"/>
</dbReference>
<dbReference type="PDB" id="2P0F">
    <property type="method" value="X-ray"/>
    <property type="resolution" value="1.91 A"/>
    <property type="chains" value="A=321-440"/>
</dbReference>
<dbReference type="PDB" id="2P0H">
    <property type="method" value="X-ray"/>
    <property type="resolution" value="1.90 A"/>
    <property type="chains" value="A=321-440"/>
</dbReference>
<dbReference type="PDBsum" id="2P0D"/>
<dbReference type="PDBsum" id="2P0F"/>
<dbReference type="PDBsum" id="2P0H"/>
<dbReference type="SMR" id="Q9BRR9"/>
<dbReference type="BioGRID" id="122140">
    <property type="interactions" value="47"/>
</dbReference>
<dbReference type="FunCoup" id="Q9BRR9">
    <property type="interactions" value="371"/>
</dbReference>
<dbReference type="IntAct" id="Q9BRR9">
    <property type="interactions" value="29"/>
</dbReference>
<dbReference type="MINT" id="Q9BRR9"/>
<dbReference type="STRING" id="9606.ENSP00000499232"/>
<dbReference type="GlyConnect" id="1716">
    <property type="glycosylation" value="1 N-Linked glycan (1 site)"/>
</dbReference>
<dbReference type="GlyCosmos" id="Q9BRR9">
    <property type="glycosylation" value="1 site, 1 glycan"/>
</dbReference>
<dbReference type="GlyGen" id="Q9BRR9">
    <property type="glycosylation" value="2 sites, 14 N-linked glycans (1 site)"/>
</dbReference>
<dbReference type="iPTMnet" id="Q9BRR9"/>
<dbReference type="PhosphoSitePlus" id="Q9BRR9"/>
<dbReference type="BioMuta" id="ARHGAP9"/>
<dbReference type="DMDM" id="47117294"/>
<dbReference type="jPOST" id="Q9BRR9"/>
<dbReference type="MassIVE" id="Q9BRR9"/>
<dbReference type="PaxDb" id="9606-ENSP00000377380"/>
<dbReference type="PeptideAtlas" id="Q9BRR9"/>
<dbReference type="ProteomicsDB" id="19770"/>
<dbReference type="ProteomicsDB" id="78819">
    <molecule id="Q9BRR9-1"/>
</dbReference>
<dbReference type="ProteomicsDB" id="78820">
    <molecule id="Q9BRR9-2"/>
</dbReference>
<dbReference type="ProteomicsDB" id="78821">
    <molecule id="Q9BRR9-3"/>
</dbReference>
<dbReference type="ProteomicsDB" id="78822">
    <molecule id="Q9BRR9-4"/>
</dbReference>
<dbReference type="Antibodypedia" id="28612">
    <property type="antibodies" value="69 antibodies from 22 providers"/>
</dbReference>
<dbReference type="DNASU" id="64333"/>
<dbReference type="Ensembl" id="ENST00000393791.8">
    <molecule id="Q9BRR9-2"/>
    <property type="protein sequence ID" value="ENSP00000377380.3"/>
    <property type="gene ID" value="ENSG00000123329.20"/>
</dbReference>
<dbReference type="Ensembl" id="ENST00000393797.7">
    <molecule id="Q9BRR9-1"/>
    <property type="protein sequence ID" value="ENSP00000377386.3"/>
    <property type="gene ID" value="ENSG00000123329.20"/>
</dbReference>
<dbReference type="Ensembl" id="ENST00000424809.6">
    <molecule id="Q9BRR9-5"/>
    <property type="protein sequence ID" value="ENSP00000394307.2"/>
    <property type="gene ID" value="ENSG00000123329.20"/>
</dbReference>
<dbReference type="Ensembl" id="ENST00000430041.6">
    <molecule id="Q9BRR9-4"/>
    <property type="protein sequence ID" value="ENSP00000397950.2"/>
    <property type="gene ID" value="ENSG00000123329.20"/>
</dbReference>
<dbReference type="GeneID" id="64333"/>
<dbReference type="KEGG" id="hsa:64333"/>
<dbReference type="MANE-Select" id="ENST00000393791.8">
    <molecule id="Q9BRR9-2"/>
    <property type="protein sequence ID" value="ENSP00000377380.3"/>
    <property type="RefSeq nucleotide sequence ID" value="NM_032496.4"/>
    <property type="RefSeq protein sequence ID" value="NP_115885.2"/>
</dbReference>
<dbReference type="UCSC" id="uc001snz.4">
    <molecule id="Q9BRR9-1"/>
    <property type="organism name" value="human"/>
</dbReference>
<dbReference type="AGR" id="HGNC:14130"/>
<dbReference type="CTD" id="64333"/>
<dbReference type="DisGeNET" id="64333"/>
<dbReference type="GeneCards" id="ARHGAP9"/>
<dbReference type="HGNC" id="HGNC:14130">
    <property type="gene designation" value="ARHGAP9"/>
</dbReference>
<dbReference type="HPA" id="ENSG00000123329">
    <property type="expression patterns" value="Tissue enhanced (bone marrow, lymphoid tissue)"/>
</dbReference>
<dbReference type="MalaCards" id="ARHGAP9"/>
<dbReference type="MIM" id="610576">
    <property type="type" value="gene"/>
</dbReference>
<dbReference type="neXtProt" id="NX_Q9BRR9"/>
<dbReference type="OpenTargets" id="ENSG00000123329"/>
<dbReference type="PharmGKB" id="PA24962"/>
<dbReference type="VEuPathDB" id="HostDB:ENSG00000123329"/>
<dbReference type="eggNOG" id="KOG1450">
    <property type="taxonomic scope" value="Eukaryota"/>
</dbReference>
<dbReference type="GeneTree" id="ENSGT00950000182860"/>
<dbReference type="HOGENOM" id="CLU_015883_6_1_1"/>
<dbReference type="InParanoid" id="Q9BRR9"/>
<dbReference type="OMA" id="ELRAWHH"/>
<dbReference type="OrthoDB" id="79452at2759"/>
<dbReference type="PAN-GO" id="Q9BRR9">
    <property type="GO annotations" value="2 GO annotations based on evolutionary models"/>
</dbReference>
<dbReference type="PhylomeDB" id="Q9BRR9"/>
<dbReference type="TreeFam" id="TF329345"/>
<dbReference type="PathwayCommons" id="Q9BRR9"/>
<dbReference type="Reactome" id="R-HSA-6798695">
    <property type="pathway name" value="Neutrophil degranulation"/>
</dbReference>
<dbReference type="Reactome" id="R-HSA-8980692">
    <property type="pathway name" value="RHOA GTPase cycle"/>
</dbReference>
<dbReference type="Reactome" id="R-HSA-9013148">
    <property type="pathway name" value="CDC42 GTPase cycle"/>
</dbReference>
<dbReference type="Reactome" id="R-HSA-9013149">
    <property type="pathway name" value="RAC1 GTPase cycle"/>
</dbReference>
<dbReference type="SignaLink" id="Q9BRR9"/>
<dbReference type="SIGNOR" id="Q9BRR9"/>
<dbReference type="BioGRID-ORCS" id="64333">
    <property type="hits" value="32 hits in 1144 CRISPR screens"/>
</dbReference>
<dbReference type="EvolutionaryTrace" id="Q9BRR9"/>
<dbReference type="GeneWiki" id="ARHGAP9"/>
<dbReference type="GenomeRNAi" id="64333"/>
<dbReference type="Pharos" id="Q9BRR9">
    <property type="development level" value="Tbio"/>
</dbReference>
<dbReference type="PRO" id="PR:Q9BRR9"/>
<dbReference type="Proteomes" id="UP000005640">
    <property type="component" value="Chromosome 12"/>
</dbReference>
<dbReference type="RNAct" id="Q9BRR9">
    <property type="molecule type" value="protein"/>
</dbReference>
<dbReference type="Bgee" id="ENSG00000123329">
    <property type="expression patterns" value="Expressed in granulocyte and 166 other cell types or tissues"/>
</dbReference>
<dbReference type="ExpressionAtlas" id="Q9BRR9">
    <property type="expression patterns" value="baseline and differential"/>
</dbReference>
<dbReference type="GO" id="GO:0005737">
    <property type="term" value="C:cytoplasm"/>
    <property type="evidence" value="ECO:0000318"/>
    <property type="project" value="GO_Central"/>
</dbReference>
<dbReference type="GO" id="GO:0005829">
    <property type="term" value="C:cytosol"/>
    <property type="evidence" value="ECO:0000304"/>
    <property type="project" value="Reactome"/>
</dbReference>
<dbReference type="GO" id="GO:0005576">
    <property type="term" value="C:extracellular region"/>
    <property type="evidence" value="ECO:0000304"/>
    <property type="project" value="Reactome"/>
</dbReference>
<dbReference type="GO" id="GO:0005886">
    <property type="term" value="C:plasma membrane"/>
    <property type="evidence" value="ECO:0000318"/>
    <property type="project" value="GO_Central"/>
</dbReference>
<dbReference type="GO" id="GO:0034774">
    <property type="term" value="C:secretory granule lumen"/>
    <property type="evidence" value="ECO:0000304"/>
    <property type="project" value="Reactome"/>
</dbReference>
<dbReference type="GO" id="GO:0005096">
    <property type="term" value="F:GTPase activator activity"/>
    <property type="evidence" value="ECO:0000314"/>
    <property type="project" value="MGI"/>
</dbReference>
<dbReference type="GO" id="GO:0005547">
    <property type="term" value="F:phosphatidylinositol-3,4,5-trisphosphate binding"/>
    <property type="evidence" value="ECO:0000314"/>
    <property type="project" value="UniProtKB"/>
</dbReference>
<dbReference type="GO" id="GO:0051056">
    <property type="term" value="P:regulation of small GTPase mediated signal transduction"/>
    <property type="evidence" value="ECO:0000304"/>
    <property type="project" value="Reactome"/>
</dbReference>
<dbReference type="GO" id="GO:0007264">
    <property type="term" value="P:small GTPase-mediated signal transduction"/>
    <property type="evidence" value="ECO:0000318"/>
    <property type="project" value="GO_Central"/>
</dbReference>
<dbReference type="CDD" id="cd13233">
    <property type="entry name" value="PH_ARHGAP9-like"/>
    <property type="match status" value="1"/>
</dbReference>
<dbReference type="CDD" id="cd04403">
    <property type="entry name" value="RhoGAP_ARHGAP27_15_12_9"/>
    <property type="match status" value="1"/>
</dbReference>
<dbReference type="CDD" id="cd12143">
    <property type="entry name" value="SH3_ARHGAP9"/>
    <property type="match status" value="1"/>
</dbReference>
<dbReference type="CDD" id="cd00201">
    <property type="entry name" value="WW"/>
    <property type="match status" value="1"/>
</dbReference>
<dbReference type="FunFam" id="2.20.70.10:FF:000073">
    <property type="entry name" value="Rho GTPase activating protein 9"/>
    <property type="match status" value="1"/>
</dbReference>
<dbReference type="FunFam" id="2.30.29.30:FF:000182">
    <property type="entry name" value="Rho GTPase activating protein 9"/>
    <property type="match status" value="1"/>
</dbReference>
<dbReference type="FunFam" id="2.30.30.40:FF:000101">
    <property type="entry name" value="Rho GTPase activating protein 9"/>
    <property type="match status" value="1"/>
</dbReference>
<dbReference type="FunFam" id="1.10.555.10:FF:000030">
    <property type="entry name" value="rho GTPase-activating protein 9 isoform X1"/>
    <property type="match status" value="1"/>
</dbReference>
<dbReference type="Gene3D" id="2.20.70.10">
    <property type="match status" value="1"/>
</dbReference>
<dbReference type="Gene3D" id="2.30.29.30">
    <property type="entry name" value="Pleckstrin-homology domain (PH domain)/Phosphotyrosine-binding domain (PTB)"/>
    <property type="match status" value="1"/>
</dbReference>
<dbReference type="Gene3D" id="1.10.555.10">
    <property type="entry name" value="Rho GTPase activation protein"/>
    <property type="match status" value="1"/>
</dbReference>
<dbReference type="Gene3D" id="2.30.30.40">
    <property type="entry name" value="SH3 Domains"/>
    <property type="match status" value="1"/>
</dbReference>
<dbReference type="InterPro" id="IPR035465">
    <property type="entry name" value="ARHGAP9_SH3"/>
</dbReference>
<dbReference type="InterPro" id="IPR011993">
    <property type="entry name" value="PH-like_dom_sf"/>
</dbReference>
<dbReference type="InterPro" id="IPR001849">
    <property type="entry name" value="PH_domain"/>
</dbReference>
<dbReference type="InterPro" id="IPR050729">
    <property type="entry name" value="Rho-GAP"/>
</dbReference>
<dbReference type="InterPro" id="IPR008936">
    <property type="entry name" value="Rho_GTPase_activation_prot"/>
</dbReference>
<dbReference type="InterPro" id="IPR000198">
    <property type="entry name" value="RhoGAP_dom"/>
</dbReference>
<dbReference type="InterPro" id="IPR036028">
    <property type="entry name" value="SH3-like_dom_sf"/>
</dbReference>
<dbReference type="InterPro" id="IPR001452">
    <property type="entry name" value="SH3_domain"/>
</dbReference>
<dbReference type="InterPro" id="IPR001202">
    <property type="entry name" value="WW_dom"/>
</dbReference>
<dbReference type="InterPro" id="IPR036020">
    <property type="entry name" value="WW_dom_sf"/>
</dbReference>
<dbReference type="PANTHER" id="PTHR23176:SF103">
    <property type="entry name" value="RHO GTPASE-ACTIVATING PROTEIN 9"/>
    <property type="match status" value="1"/>
</dbReference>
<dbReference type="PANTHER" id="PTHR23176">
    <property type="entry name" value="RHO/RAC/CDC GTPASE-ACTIVATING PROTEIN"/>
    <property type="match status" value="1"/>
</dbReference>
<dbReference type="Pfam" id="PF00169">
    <property type="entry name" value="PH"/>
    <property type="match status" value="1"/>
</dbReference>
<dbReference type="Pfam" id="PF00620">
    <property type="entry name" value="RhoGAP"/>
    <property type="match status" value="1"/>
</dbReference>
<dbReference type="Pfam" id="PF00018">
    <property type="entry name" value="SH3_1"/>
    <property type="match status" value="1"/>
</dbReference>
<dbReference type="SMART" id="SM00233">
    <property type="entry name" value="PH"/>
    <property type="match status" value="1"/>
</dbReference>
<dbReference type="SMART" id="SM00324">
    <property type="entry name" value="RhoGAP"/>
    <property type="match status" value="1"/>
</dbReference>
<dbReference type="SUPFAM" id="SSF48350">
    <property type="entry name" value="GTPase activation domain, GAP"/>
    <property type="match status" value="1"/>
</dbReference>
<dbReference type="SUPFAM" id="SSF50729">
    <property type="entry name" value="PH domain-like"/>
    <property type="match status" value="1"/>
</dbReference>
<dbReference type="SUPFAM" id="SSF50044">
    <property type="entry name" value="SH3-domain"/>
    <property type="match status" value="1"/>
</dbReference>
<dbReference type="SUPFAM" id="SSF51045">
    <property type="entry name" value="WW domain"/>
    <property type="match status" value="1"/>
</dbReference>
<dbReference type="PROSITE" id="PS50003">
    <property type="entry name" value="PH_DOMAIN"/>
    <property type="match status" value="1"/>
</dbReference>
<dbReference type="PROSITE" id="PS50238">
    <property type="entry name" value="RHOGAP"/>
    <property type="match status" value="1"/>
</dbReference>
<dbReference type="PROSITE" id="PS50002">
    <property type="entry name" value="SH3"/>
    <property type="match status" value="1"/>
</dbReference>
<dbReference type="PROSITE" id="PS50020">
    <property type="entry name" value="WW_DOMAIN_2"/>
    <property type="match status" value="1"/>
</dbReference>